<gene>
    <name type="primary">KRCC1</name>
</gene>
<sequence>MKHSKKTYDSFQDELEDYIKVQKARGLEPKTCFRKMREDYLETYGYKEEVDSRPRCRMFEQRLPYGTVQTYPRSCSISQRVEKQLPQWLPAHDSRLRLDSLSYSQFTRDCFSGKPVPPNLSQHESNCSSYSVESGVYRHLSSENNTSAHQASYKHIHQKRKRHTEEGREKPEEERPKHKRKKACEEIDLDKYKSIQTSKTEAETVRVSTEKLKNRKEKRSRDVASKKEERKRRKEKKEQGQERTEEEMLWDQSILGF</sequence>
<accession>Q17QQ9</accession>
<keyword id="KW-0175">Coiled coil</keyword>
<keyword id="KW-1185">Reference proteome</keyword>
<feature type="chain" id="PRO_0000306395" description="Lysine-rich coiled-coil protein 1">
    <location>
        <begin position="1"/>
        <end position="257"/>
    </location>
</feature>
<feature type="region of interest" description="Disordered" evidence="2">
    <location>
        <begin position="145"/>
        <end position="257"/>
    </location>
</feature>
<feature type="coiled-coil region" evidence="1">
    <location>
        <begin position="210"/>
        <end position="248"/>
    </location>
</feature>
<feature type="compositionally biased region" description="Basic residues" evidence="2">
    <location>
        <begin position="152"/>
        <end position="162"/>
    </location>
</feature>
<feature type="compositionally biased region" description="Basic and acidic residues" evidence="2">
    <location>
        <begin position="163"/>
        <end position="176"/>
    </location>
</feature>
<feature type="compositionally biased region" description="Basic and acidic residues" evidence="2">
    <location>
        <begin position="183"/>
        <end position="193"/>
    </location>
</feature>
<feature type="compositionally biased region" description="Basic and acidic residues" evidence="2">
    <location>
        <begin position="200"/>
        <end position="212"/>
    </location>
</feature>
<feature type="compositionally biased region" description="Basic and acidic residues" evidence="2">
    <location>
        <begin position="219"/>
        <end position="228"/>
    </location>
</feature>
<protein>
    <recommendedName>
        <fullName>Lysine-rich coiled-coil protein 1</fullName>
    </recommendedName>
</protein>
<dbReference type="EMBL" id="BC118228">
    <property type="protein sequence ID" value="AAI18229.1"/>
    <property type="molecule type" value="mRNA"/>
</dbReference>
<dbReference type="RefSeq" id="NP_001068771.1">
    <property type="nucleotide sequence ID" value="NM_001075303.1"/>
</dbReference>
<dbReference type="RefSeq" id="XP_005212813.1">
    <property type="nucleotide sequence ID" value="XM_005212756.5"/>
</dbReference>
<dbReference type="RefSeq" id="XP_005212815.1">
    <property type="nucleotide sequence ID" value="XM_005212758.3"/>
</dbReference>
<dbReference type="RefSeq" id="XP_010808356.1">
    <property type="nucleotide sequence ID" value="XM_010810054.2"/>
</dbReference>
<dbReference type="RefSeq" id="XP_059747086.1">
    <property type="nucleotide sequence ID" value="XM_059891103.1"/>
</dbReference>
<dbReference type="FunCoup" id="Q17QQ9">
    <property type="interactions" value="320"/>
</dbReference>
<dbReference type="STRING" id="9913.ENSBTAP00000073424"/>
<dbReference type="PaxDb" id="9913-ENSBTAP00000042369"/>
<dbReference type="Ensembl" id="ENSBTAT00000044927.3">
    <property type="protein sequence ID" value="ENSBTAP00000042369.1"/>
    <property type="gene ID" value="ENSBTAG00000002542.5"/>
</dbReference>
<dbReference type="Ensembl" id="ENSBTAT00000078504.2">
    <property type="protein sequence ID" value="ENSBTAP00000073424.2"/>
    <property type="gene ID" value="ENSBTAG00000002542.5"/>
</dbReference>
<dbReference type="Ensembl" id="ENSBTAT00000087755.1">
    <property type="protein sequence ID" value="ENSBTAP00000091477.1"/>
    <property type="gene ID" value="ENSBTAG00000002542.5"/>
</dbReference>
<dbReference type="Ensembl" id="ENSBTAT00000099662.1">
    <property type="protein sequence ID" value="ENSBTAP00000079035.1"/>
    <property type="gene ID" value="ENSBTAG00000002542.5"/>
</dbReference>
<dbReference type="Ensembl" id="ENSBTAT00000103601.1">
    <property type="protein sequence ID" value="ENSBTAP00000102672.1"/>
    <property type="gene ID" value="ENSBTAG00000002542.5"/>
</dbReference>
<dbReference type="Ensembl" id="ENSBTAT00000117803.1">
    <property type="protein sequence ID" value="ENSBTAP00000084446.1"/>
    <property type="gene ID" value="ENSBTAG00000002542.5"/>
</dbReference>
<dbReference type="Ensembl" id="ENSBTAT00000126999.1">
    <property type="protein sequence ID" value="ENSBTAP00000086421.1"/>
    <property type="gene ID" value="ENSBTAG00000002542.5"/>
</dbReference>
<dbReference type="Ensembl" id="ENSBTAT00000132836.1">
    <property type="protein sequence ID" value="ENSBTAP00000087790.1"/>
    <property type="gene ID" value="ENSBTAG00000002542.5"/>
</dbReference>
<dbReference type="GeneID" id="507166"/>
<dbReference type="KEGG" id="bta:507166"/>
<dbReference type="CTD" id="51315"/>
<dbReference type="VEuPathDB" id="HostDB:ENSBTAG00000002542"/>
<dbReference type="VGNC" id="VGNC:30712">
    <property type="gene designation" value="KRCC1"/>
</dbReference>
<dbReference type="eggNOG" id="ENOG502RTYF">
    <property type="taxonomic scope" value="Eukaryota"/>
</dbReference>
<dbReference type="GeneTree" id="ENSGT00940000162565"/>
<dbReference type="HOGENOM" id="CLU_032533_0_0_1"/>
<dbReference type="InParanoid" id="Q17QQ9"/>
<dbReference type="OrthoDB" id="9747435at2759"/>
<dbReference type="ChiTaRS" id="KRCC1">
    <property type="organism name" value="cattle"/>
</dbReference>
<dbReference type="Proteomes" id="UP000009136">
    <property type="component" value="Chromosome 11"/>
</dbReference>
<dbReference type="Bgee" id="ENSBTAG00000002542">
    <property type="expression patterns" value="Expressed in thymus and 104 other cell types or tissues"/>
</dbReference>
<dbReference type="PANTHER" id="PTHR46742">
    <property type="entry name" value="LYSINE-RICH COILED-COIL PROTEIN 1"/>
    <property type="match status" value="1"/>
</dbReference>
<dbReference type="PANTHER" id="PTHR46742:SF3">
    <property type="entry name" value="LYSINE-RICH COILED-COIL PROTEIN 1"/>
    <property type="match status" value="1"/>
</dbReference>
<proteinExistence type="evidence at transcript level"/>
<organism>
    <name type="scientific">Bos taurus</name>
    <name type="common">Bovine</name>
    <dbReference type="NCBI Taxonomy" id="9913"/>
    <lineage>
        <taxon>Eukaryota</taxon>
        <taxon>Metazoa</taxon>
        <taxon>Chordata</taxon>
        <taxon>Craniata</taxon>
        <taxon>Vertebrata</taxon>
        <taxon>Euteleostomi</taxon>
        <taxon>Mammalia</taxon>
        <taxon>Eutheria</taxon>
        <taxon>Laurasiatheria</taxon>
        <taxon>Artiodactyla</taxon>
        <taxon>Ruminantia</taxon>
        <taxon>Pecora</taxon>
        <taxon>Bovidae</taxon>
        <taxon>Bovinae</taxon>
        <taxon>Bos</taxon>
    </lineage>
</organism>
<reference key="1">
    <citation type="submission" date="2006-06" db="EMBL/GenBank/DDBJ databases">
        <authorList>
            <consortium name="NIH - Mammalian Gene Collection (MGC) project"/>
        </authorList>
    </citation>
    <scope>NUCLEOTIDE SEQUENCE [LARGE SCALE MRNA]</scope>
    <source>
        <strain>Hereford</strain>
        <tissue>Hippocampus</tissue>
    </source>
</reference>
<evidence type="ECO:0000255" key="1"/>
<evidence type="ECO:0000256" key="2">
    <source>
        <dbReference type="SAM" id="MobiDB-lite"/>
    </source>
</evidence>
<name>KRCC1_BOVIN</name>